<keyword id="KW-0067">ATP-binding</keyword>
<keyword id="KW-0133">Cell shape</keyword>
<keyword id="KW-0961">Cell wall biogenesis/degradation</keyword>
<keyword id="KW-0963">Cytoplasm</keyword>
<keyword id="KW-0436">Ligase</keyword>
<keyword id="KW-0460">Magnesium</keyword>
<keyword id="KW-0464">Manganese</keyword>
<keyword id="KW-0479">Metal-binding</keyword>
<keyword id="KW-0547">Nucleotide-binding</keyword>
<keyword id="KW-0573">Peptidoglycan synthesis</keyword>
<comment type="function">
    <text evidence="2">Cell wall formation.</text>
</comment>
<comment type="catalytic activity">
    <reaction evidence="2">
        <text>2 D-alanine + ATP = D-alanyl-D-alanine + ADP + phosphate + H(+)</text>
        <dbReference type="Rhea" id="RHEA:11224"/>
        <dbReference type="ChEBI" id="CHEBI:15378"/>
        <dbReference type="ChEBI" id="CHEBI:30616"/>
        <dbReference type="ChEBI" id="CHEBI:43474"/>
        <dbReference type="ChEBI" id="CHEBI:57416"/>
        <dbReference type="ChEBI" id="CHEBI:57822"/>
        <dbReference type="ChEBI" id="CHEBI:456216"/>
        <dbReference type="EC" id="6.3.2.4"/>
    </reaction>
</comment>
<comment type="cofactor">
    <cofactor evidence="1">
        <name>Mg(2+)</name>
        <dbReference type="ChEBI" id="CHEBI:18420"/>
    </cofactor>
    <cofactor evidence="1">
        <name>Mn(2+)</name>
        <dbReference type="ChEBI" id="CHEBI:29035"/>
    </cofactor>
    <text evidence="1">Binds 2 magnesium or manganese ions per subunit.</text>
</comment>
<comment type="pathway">
    <text evidence="2">Cell wall biogenesis; peptidoglycan biosynthesis.</text>
</comment>
<comment type="subcellular location">
    <subcellularLocation>
        <location evidence="2">Cytoplasm</location>
    </subcellularLocation>
</comment>
<comment type="similarity">
    <text evidence="2">Belongs to the D-alanine--D-alanine ligase family.</text>
</comment>
<proteinExistence type="inferred from homology"/>
<accession>B9MLC6</accession>
<reference key="1">
    <citation type="submission" date="2009-01" db="EMBL/GenBank/DDBJ databases">
        <title>Complete sequence of chromosome of Caldicellulosiruptor becscii DSM 6725.</title>
        <authorList>
            <person name="Lucas S."/>
            <person name="Copeland A."/>
            <person name="Lapidus A."/>
            <person name="Glavina del Rio T."/>
            <person name="Tice H."/>
            <person name="Bruce D."/>
            <person name="Goodwin L."/>
            <person name="Pitluck S."/>
            <person name="Sims D."/>
            <person name="Meincke L."/>
            <person name="Brettin T."/>
            <person name="Detter J.C."/>
            <person name="Han C."/>
            <person name="Larimer F."/>
            <person name="Land M."/>
            <person name="Hauser L."/>
            <person name="Kyrpides N."/>
            <person name="Ovchinnikova G."/>
            <person name="Kataeva I."/>
            <person name="Adams M.W.W."/>
        </authorList>
    </citation>
    <scope>NUCLEOTIDE SEQUENCE [LARGE SCALE GENOMIC DNA]</scope>
    <source>
        <strain>ATCC BAA-1888 / DSM 6725 / KCTC 15123 / Z-1320</strain>
    </source>
</reference>
<gene>
    <name evidence="2" type="primary">ddl</name>
    <name type="ordered locus">Athe_2039</name>
</gene>
<feature type="chain" id="PRO_1000117445" description="D-alanine--D-alanine ligase">
    <location>
        <begin position="1"/>
        <end position="364"/>
    </location>
</feature>
<feature type="domain" description="ATP-grasp" evidence="2">
    <location>
        <begin position="140"/>
        <end position="346"/>
    </location>
</feature>
<feature type="binding site" evidence="2">
    <location>
        <begin position="173"/>
        <end position="228"/>
    </location>
    <ligand>
        <name>ATP</name>
        <dbReference type="ChEBI" id="CHEBI:30616"/>
    </ligand>
</feature>
<feature type="binding site" evidence="2">
    <location>
        <position position="299"/>
    </location>
    <ligand>
        <name>Mg(2+)</name>
        <dbReference type="ChEBI" id="CHEBI:18420"/>
        <label>1</label>
    </ligand>
</feature>
<feature type="binding site" evidence="2">
    <location>
        <position position="313"/>
    </location>
    <ligand>
        <name>Mg(2+)</name>
        <dbReference type="ChEBI" id="CHEBI:18420"/>
        <label>1</label>
    </ligand>
</feature>
<feature type="binding site" evidence="2">
    <location>
        <position position="313"/>
    </location>
    <ligand>
        <name>Mg(2+)</name>
        <dbReference type="ChEBI" id="CHEBI:18420"/>
        <label>2</label>
    </ligand>
</feature>
<feature type="binding site" evidence="2">
    <location>
        <position position="315"/>
    </location>
    <ligand>
        <name>Mg(2+)</name>
        <dbReference type="ChEBI" id="CHEBI:18420"/>
        <label>2</label>
    </ligand>
</feature>
<sequence length="364" mass="40910">MTKLKVAVLFGGVSTEHEISIVSAKSIMQNMDKEKYEVIPIGITKEGKWLLYTGKIEDLDSKWTQFSIECFVSPDRTKKALVKVKDNEATFIDIDVVFPVLHGLNGEDGTVQGLLELSGIPYVGCGVLSSAICMDKAFAKKLALLEGIPQGHFLVVYKNEYSAKKDYFIRRIESEFSYPVFVKPANSGSSVGISKAKDREDLVLAIHEAFLYDTKILIEQAINAREIECAVLGNDEVFVSEPGEIIPSREFYSYEAKYIDNSSELIIPARLPKEVTEEIKDLAGRIYKIFECCGMARVDFFVDKDTNKVYFNEVNTIPGFTSISMYPKLMEFSGIPYSQLIDKLISLAIEKNRQKKSIKYSKEG</sequence>
<dbReference type="EC" id="6.3.2.4" evidence="2"/>
<dbReference type="EMBL" id="CP001393">
    <property type="protein sequence ID" value="ACM61116.1"/>
    <property type="molecule type" value="Genomic_DNA"/>
</dbReference>
<dbReference type="RefSeq" id="WP_015908400.1">
    <property type="nucleotide sequence ID" value="NC_012034.1"/>
</dbReference>
<dbReference type="SMR" id="B9MLC6"/>
<dbReference type="STRING" id="521460.Athe_2039"/>
<dbReference type="GeneID" id="31773388"/>
<dbReference type="KEGG" id="ate:Athe_2039"/>
<dbReference type="eggNOG" id="COG1181">
    <property type="taxonomic scope" value="Bacteria"/>
</dbReference>
<dbReference type="HOGENOM" id="CLU_039268_0_0_9"/>
<dbReference type="UniPathway" id="UPA00219"/>
<dbReference type="Proteomes" id="UP000007723">
    <property type="component" value="Chromosome"/>
</dbReference>
<dbReference type="GO" id="GO:0005829">
    <property type="term" value="C:cytosol"/>
    <property type="evidence" value="ECO:0007669"/>
    <property type="project" value="TreeGrafter"/>
</dbReference>
<dbReference type="GO" id="GO:0005524">
    <property type="term" value="F:ATP binding"/>
    <property type="evidence" value="ECO:0007669"/>
    <property type="project" value="UniProtKB-KW"/>
</dbReference>
<dbReference type="GO" id="GO:0008716">
    <property type="term" value="F:D-alanine-D-alanine ligase activity"/>
    <property type="evidence" value="ECO:0007669"/>
    <property type="project" value="UniProtKB-UniRule"/>
</dbReference>
<dbReference type="GO" id="GO:0046872">
    <property type="term" value="F:metal ion binding"/>
    <property type="evidence" value="ECO:0007669"/>
    <property type="project" value="UniProtKB-KW"/>
</dbReference>
<dbReference type="GO" id="GO:0071555">
    <property type="term" value="P:cell wall organization"/>
    <property type="evidence" value="ECO:0007669"/>
    <property type="project" value="UniProtKB-KW"/>
</dbReference>
<dbReference type="GO" id="GO:0009252">
    <property type="term" value="P:peptidoglycan biosynthetic process"/>
    <property type="evidence" value="ECO:0007669"/>
    <property type="project" value="UniProtKB-UniRule"/>
</dbReference>
<dbReference type="GO" id="GO:0008360">
    <property type="term" value="P:regulation of cell shape"/>
    <property type="evidence" value="ECO:0007669"/>
    <property type="project" value="UniProtKB-KW"/>
</dbReference>
<dbReference type="FunFam" id="3.30.1490.20:FF:000007">
    <property type="entry name" value="D-alanine--D-alanine ligase"/>
    <property type="match status" value="1"/>
</dbReference>
<dbReference type="FunFam" id="3.30.470.20:FF:000008">
    <property type="entry name" value="D-alanine--D-alanine ligase"/>
    <property type="match status" value="1"/>
</dbReference>
<dbReference type="Gene3D" id="3.40.50.20">
    <property type="match status" value="1"/>
</dbReference>
<dbReference type="Gene3D" id="3.30.1490.20">
    <property type="entry name" value="ATP-grasp fold, A domain"/>
    <property type="match status" value="1"/>
</dbReference>
<dbReference type="Gene3D" id="3.30.470.20">
    <property type="entry name" value="ATP-grasp fold, B domain"/>
    <property type="match status" value="1"/>
</dbReference>
<dbReference type="HAMAP" id="MF_00047">
    <property type="entry name" value="Dala_Dala_lig"/>
    <property type="match status" value="1"/>
</dbReference>
<dbReference type="InterPro" id="IPR011761">
    <property type="entry name" value="ATP-grasp"/>
</dbReference>
<dbReference type="InterPro" id="IPR013815">
    <property type="entry name" value="ATP_grasp_subdomain_1"/>
</dbReference>
<dbReference type="InterPro" id="IPR000291">
    <property type="entry name" value="D-Ala_lig_Van_CS"/>
</dbReference>
<dbReference type="InterPro" id="IPR005905">
    <property type="entry name" value="D_ala_D_ala"/>
</dbReference>
<dbReference type="InterPro" id="IPR011095">
    <property type="entry name" value="Dala_Dala_lig_C"/>
</dbReference>
<dbReference type="InterPro" id="IPR011127">
    <property type="entry name" value="Dala_Dala_lig_N"/>
</dbReference>
<dbReference type="InterPro" id="IPR016185">
    <property type="entry name" value="PreATP-grasp_dom_sf"/>
</dbReference>
<dbReference type="NCBIfam" id="TIGR01205">
    <property type="entry name" value="D_ala_D_alaTIGR"/>
    <property type="match status" value="1"/>
</dbReference>
<dbReference type="NCBIfam" id="NF002378">
    <property type="entry name" value="PRK01372.1"/>
    <property type="match status" value="1"/>
</dbReference>
<dbReference type="NCBIfam" id="NF002528">
    <property type="entry name" value="PRK01966.1-4"/>
    <property type="match status" value="1"/>
</dbReference>
<dbReference type="PANTHER" id="PTHR23132">
    <property type="entry name" value="D-ALANINE--D-ALANINE LIGASE"/>
    <property type="match status" value="1"/>
</dbReference>
<dbReference type="PANTHER" id="PTHR23132:SF25">
    <property type="entry name" value="D-ALANINE--D-ALANINE LIGASE A"/>
    <property type="match status" value="1"/>
</dbReference>
<dbReference type="Pfam" id="PF07478">
    <property type="entry name" value="Dala_Dala_lig_C"/>
    <property type="match status" value="1"/>
</dbReference>
<dbReference type="Pfam" id="PF01820">
    <property type="entry name" value="Dala_Dala_lig_N"/>
    <property type="match status" value="1"/>
</dbReference>
<dbReference type="PIRSF" id="PIRSF039102">
    <property type="entry name" value="Ddl/VanB"/>
    <property type="match status" value="1"/>
</dbReference>
<dbReference type="SUPFAM" id="SSF56059">
    <property type="entry name" value="Glutathione synthetase ATP-binding domain-like"/>
    <property type="match status" value="1"/>
</dbReference>
<dbReference type="SUPFAM" id="SSF52440">
    <property type="entry name" value="PreATP-grasp domain"/>
    <property type="match status" value="1"/>
</dbReference>
<dbReference type="PROSITE" id="PS50975">
    <property type="entry name" value="ATP_GRASP"/>
    <property type="match status" value="1"/>
</dbReference>
<dbReference type="PROSITE" id="PS00843">
    <property type="entry name" value="DALA_DALA_LIGASE_1"/>
    <property type="match status" value="1"/>
</dbReference>
<dbReference type="PROSITE" id="PS00844">
    <property type="entry name" value="DALA_DALA_LIGASE_2"/>
    <property type="match status" value="1"/>
</dbReference>
<evidence type="ECO:0000250" key="1"/>
<evidence type="ECO:0000255" key="2">
    <source>
        <dbReference type="HAMAP-Rule" id="MF_00047"/>
    </source>
</evidence>
<organism>
    <name type="scientific">Caldicellulosiruptor bescii (strain ATCC BAA-1888 / DSM 6725 / KCTC 15123 / Z-1320)</name>
    <name type="common">Anaerocellum thermophilum</name>
    <dbReference type="NCBI Taxonomy" id="521460"/>
    <lineage>
        <taxon>Bacteria</taxon>
        <taxon>Bacillati</taxon>
        <taxon>Bacillota</taxon>
        <taxon>Bacillota incertae sedis</taxon>
        <taxon>Caldicellulosiruptorales</taxon>
        <taxon>Caldicellulosiruptoraceae</taxon>
        <taxon>Caldicellulosiruptor</taxon>
    </lineage>
</organism>
<protein>
    <recommendedName>
        <fullName evidence="2">D-alanine--D-alanine ligase</fullName>
        <ecNumber evidence="2">6.3.2.4</ecNumber>
    </recommendedName>
    <alternativeName>
        <fullName evidence="2">D-Ala-D-Ala ligase</fullName>
    </alternativeName>
    <alternativeName>
        <fullName evidence="2">D-alanylalanine synthetase</fullName>
    </alternativeName>
</protein>
<name>DDL_CALBD</name>